<sequence>MKAGRAFGCLFWALLYCVLYLDLVSGNSADDELMDFDFADSNDAAMEDWQLDDLEEAKKAEQAEKKLESNMLDFSVDLDEPEPEKQLPPFDWRERVLRNALAKALADEGLRQKFAEVLPILRMLSSQQRLALSALISAQMNAKKGHELKFEQVRMMFGNEKKLLLPIVFDIANLIKSSTRKYINLGSDLASSALYHTPINRREDDLTPEESQQDDQLGTIAVEVEPKKVSTEEVQLESLEDFFDEMGSEVLDPQMINEALTGDLHDNKTKTFKPENHGQRVRRSANEFVHKLTRSVPASVTEQQLLGGIAGRTIKLNTTAFQQPSSQEEEKMASSNGGQSYSEVEDLAFAGLNGTEIPLSADERLDLQRNSAEETEEPLPSPEELIAGPRYRLGKRPLPGQKSGSPIKRKRVTSSLRGRPKTAASSHKPVVTPPNKKCERFTSNMCIRTDDYPLEQIMGSIRRHKNAMSALLAEFYDKPNNNLEFSDDFDDFSLSKKRREDEGSAGGMCQSVVRYARPQKAKSASGEWKYIVNTGQHTQTLRLEKCSNPVESCSYLAQTYRSHCSQVYNYHRLLSWDKVRGLHVDIFKVPTCCSCQVDGYRQQFPPLSSIQAKDYSPQSPVINHSHNGYSTINEEDLDYAEESEEDELGLRYPSFNNRETNELYSSSNKVRVKLPGISSSVGPYLSPPDDDEDRYGGYKSSSSSSKKYYSQVSRRRPQHSEARLDLDLAPSETHSDQEPPPPQHHQHHHLQYHRPQEELPSAYDFHRPQVYQPEREQLPLVRDPALSPVSAPVLASPAPPLPMPPMPIKQVPSHHQAHHQQPHHHLHQSTGKVAANRDPASMHHQPPRRPTQQWLPGQRRPFRPSAPLSGSGISRRHYHNRRQSIQ</sequence>
<protein>
    <recommendedName>
        <fullName evidence="15">Neurotrophin 1</fullName>
    </recommendedName>
    <alternativeName>
        <fullName evidence="11">Neurotrophic factor 1</fullName>
    </alternativeName>
    <alternativeName>
        <fullName evidence="9">Protein spaetzle 2</fullName>
    </alternativeName>
    <alternativeName>
        <fullName evidence="11">Protein spatzle 2</fullName>
    </alternativeName>
</protein>
<name>SPZ2_DROME</name>
<gene>
    <name evidence="15" type="primary">NT1</name>
    <name evidence="9" type="synonym">DNT1</name>
    <name evidence="9" type="synonym">spz2</name>
    <name evidence="15" type="ORF">CG42576</name>
</gene>
<accession>B7TB45</accession>
<accession>Q8IRB0</accession>
<dbReference type="EMBL" id="FJ172423">
    <property type="protein sequence ID" value="ACH98104.1"/>
    <property type="molecule type" value="mRNA"/>
</dbReference>
<dbReference type="EMBL" id="BT120209">
    <property type="protein sequence ID" value="ADB91457.1"/>
    <property type="molecule type" value="mRNA"/>
</dbReference>
<dbReference type="EMBL" id="FJ172424">
    <property type="protein sequence ID" value="ACH98105.1"/>
    <property type="molecule type" value="mRNA"/>
</dbReference>
<dbReference type="EMBL" id="BK006739">
    <property type="protein sequence ID" value="DAA06447.1"/>
    <property type="molecule type" value="mRNA"/>
</dbReference>
<dbReference type="EMBL" id="BK006740">
    <property type="protein sequence ID" value="DAA06448.1"/>
    <property type="molecule type" value="mRNA"/>
</dbReference>
<dbReference type="EMBL" id="AE014296">
    <property type="protein sequence ID" value="ACZ94620.1"/>
    <property type="molecule type" value="Genomic_DNA"/>
</dbReference>
<dbReference type="EMBL" id="AE014296">
    <property type="protein sequence ID" value="ACZ94621.1"/>
    <property type="molecule type" value="Genomic_DNA"/>
</dbReference>
<dbReference type="EMBL" id="AE014296">
    <property type="protein sequence ID" value="AAN11606.1"/>
    <property type="molecule type" value="Genomic_DNA"/>
</dbReference>
<dbReference type="EMBL" id="AE014296">
    <property type="protein sequence ID" value="AAN11607.1"/>
    <property type="molecule type" value="Genomic_DNA"/>
</dbReference>
<dbReference type="EMBL" id="BT120208">
    <property type="protein sequence ID" value="ADB91456.1"/>
    <property type="molecule type" value="mRNA"/>
</dbReference>
<dbReference type="RefSeq" id="NP_001163348.1">
    <molecule id="B7TB45-1"/>
    <property type="nucleotide sequence ID" value="NM_001169877.2"/>
</dbReference>
<dbReference type="RefSeq" id="NP_001163349.1">
    <molecule id="B7TB45-2"/>
    <property type="nucleotide sequence ID" value="NM_001169878.2"/>
</dbReference>
<dbReference type="RefSeq" id="NP_729010.1">
    <molecule id="B7TB45-2"/>
    <property type="nucleotide sequence ID" value="NM_168091.3"/>
</dbReference>
<dbReference type="RefSeq" id="NP_729011.1">
    <molecule id="B7TB45-2"/>
    <property type="nucleotide sequence ID" value="NM_168092.3"/>
</dbReference>
<dbReference type="SMR" id="B7TB45"/>
<dbReference type="FunCoup" id="B7TB45">
    <property type="interactions" value="34"/>
</dbReference>
<dbReference type="IntAct" id="B7TB45">
    <property type="interactions" value="1"/>
</dbReference>
<dbReference type="STRING" id="7227.FBpp0305763"/>
<dbReference type="GlyCosmos" id="B7TB45">
    <property type="glycosylation" value="4 sites, No reported glycans"/>
</dbReference>
<dbReference type="GlyGen" id="B7TB45">
    <property type="glycosylation" value="4 sites"/>
</dbReference>
<dbReference type="PaxDb" id="7227-FBpp0290823"/>
<dbReference type="DNASU" id="38558"/>
<dbReference type="EnsemblMetazoa" id="FBtr0301517">
    <molecule id="B7TB45-2"/>
    <property type="protein sequence ID" value="FBpp0290732"/>
    <property type="gene ID" value="FBgn0261526"/>
</dbReference>
<dbReference type="EnsemblMetazoa" id="FBtr0301518">
    <molecule id="B7TB45-2"/>
    <property type="protein sequence ID" value="FBpp0290733"/>
    <property type="gene ID" value="FBgn0261526"/>
</dbReference>
<dbReference type="EnsemblMetazoa" id="FBtr0301519">
    <molecule id="B7TB45-1"/>
    <property type="protein sequence ID" value="FBpp0290734"/>
    <property type="gene ID" value="FBgn0261526"/>
</dbReference>
<dbReference type="EnsemblMetazoa" id="FBtr0301520">
    <molecule id="B7TB45-2"/>
    <property type="protein sequence ID" value="FBpp0290735"/>
    <property type="gene ID" value="FBgn0261526"/>
</dbReference>
<dbReference type="GeneID" id="38558"/>
<dbReference type="KEGG" id="dme:Dmel_CG42576"/>
<dbReference type="UCSC" id="CG32244-RB">
    <property type="organism name" value="d. melanogaster"/>
</dbReference>
<dbReference type="AGR" id="FB:FBgn0261526"/>
<dbReference type="CTD" id="38558"/>
<dbReference type="FlyBase" id="FBgn0261526">
    <property type="gene designation" value="NT1"/>
</dbReference>
<dbReference type="VEuPathDB" id="VectorBase:FBgn0261526"/>
<dbReference type="eggNOG" id="ENOG502RZ0W">
    <property type="taxonomic scope" value="Eukaryota"/>
</dbReference>
<dbReference type="HOGENOM" id="CLU_325493_0_0_1"/>
<dbReference type="InParanoid" id="B7TB45"/>
<dbReference type="OMA" id="AHAHQTG"/>
<dbReference type="OrthoDB" id="8197497at2759"/>
<dbReference type="BioGRID-ORCS" id="38558">
    <property type="hits" value="0 hits in 1 CRISPR screen"/>
</dbReference>
<dbReference type="ChiTaRS" id="NT1">
    <property type="organism name" value="fly"/>
</dbReference>
<dbReference type="GenomeRNAi" id="38558"/>
<dbReference type="PRO" id="PR:B7TB45"/>
<dbReference type="Proteomes" id="UP000000803">
    <property type="component" value="Chromosome 3L"/>
</dbReference>
<dbReference type="Bgee" id="FBgn0261526">
    <property type="expression patterns" value="Expressed in ventral longitudinal muscle (Drosophila) and 25 other cell types or tissues"/>
</dbReference>
<dbReference type="ExpressionAtlas" id="B7TB45">
    <property type="expression patterns" value="baseline and differential"/>
</dbReference>
<dbReference type="GO" id="GO:0005576">
    <property type="term" value="C:extracellular region"/>
    <property type="evidence" value="ECO:0000318"/>
    <property type="project" value="GO_Central"/>
</dbReference>
<dbReference type="GO" id="GO:0005615">
    <property type="term" value="C:extracellular space"/>
    <property type="evidence" value="ECO:0000314"/>
    <property type="project" value="FlyBase"/>
</dbReference>
<dbReference type="GO" id="GO:0008083">
    <property type="term" value="F:growth factor activity"/>
    <property type="evidence" value="ECO:0000315"/>
    <property type="project" value="FlyBase"/>
</dbReference>
<dbReference type="GO" id="GO:0048018">
    <property type="term" value="F:receptor ligand activity"/>
    <property type="evidence" value="ECO:0000314"/>
    <property type="project" value="FlyBase"/>
</dbReference>
<dbReference type="GO" id="GO:0005121">
    <property type="term" value="F:Toll binding"/>
    <property type="evidence" value="ECO:0000314"/>
    <property type="project" value="FlyBase"/>
</dbReference>
<dbReference type="GO" id="GO:0021556">
    <property type="term" value="P:central nervous system formation"/>
    <property type="evidence" value="ECO:0000315"/>
    <property type="project" value="FlyBase"/>
</dbReference>
<dbReference type="GO" id="GO:0045087">
    <property type="term" value="P:innate immune response"/>
    <property type="evidence" value="ECO:0000318"/>
    <property type="project" value="GO_Central"/>
</dbReference>
<dbReference type="GO" id="GO:0008045">
    <property type="term" value="P:motor neuron axon guidance"/>
    <property type="evidence" value="ECO:0000315"/>
    <property type="project" value="FlyBase"/>
</dbReference>
<dbReference type="GO" id="GO:0043524">
    <property type="term" value="P:negative regulation of neuron apoptotic process"/>
    <property type="evidence" value="ECO:0000314"/>
    <property type="project" value="FlyBase"/>
</dbReference>
<dbReference type="GO" id="GO:0031637">
    <property type="term" value="P:regulation of neuronal synaptic plasticity in response to neurotrophin"/>
    <property type="evidence" value="ECO:0000315"/>
    <property type="project" value="FlyBase"/>
</dbReference>
<dbReference type="GO" id="GO:0008063">
    <property type="term" value="P:Toll signaling pathway"/>
    <property type="evidence" value="ECO:0000314"/>
    <property type="project" value="FlyBase"/>
</dbReference>
<dbReference type="FunFam" id="2.10.90.10:FF:000043">
    <property type="entry name" value="Neurotrophin 1, isoform A"/>
    <property type="match status" value="1"/>
</dbReference>
<dbReference type="Gene3D" id="2.10.90.10">
    <property type="entry name" value="Cystine-knot cytokines"/>
    <property type="match status" value="1"/>
</dbReference>
<dbReference type="InterPro" id="IPR029034">
    <property type="entry name" value="Cystine-knot_cytokine"/>
</dbReference>
<dbReference type="InterPro" id="IPR056200">
    <property type="entry name" value="NT_N"/>
</dbReference>
<dbReference type="InterPro" id="IPR032104">
    <property type="entry name" value="Spaetzle"/>
</dbReference>
<dbReference type="InterPro" id="IPR052444">
    <property type="entry name" value="Spz/Toll_ligand-like"/>
</dbReference>
<dbReference type="PANTHER" id="PTHR23199">
    <property type="entry name" value="NEUROTROPHIN 1-RELATED"/>
    <property type="match status" value="1"/>
</dbReference>
<dbReference type="PANTHER" id="PTHR23199:SF12">
    <property type="entry name" value="NEUROTROPHIN 1-RELATED"/>
    <property type="match status" value="1"/>
</dbReference>
<dbReference type="Pfam" id="PF24103">
    <property type="entry name" value="NT_N"/>
    <property type="match status" value="1"/>
</dbReference>
<dbReference type="Pfam" id="PF16077">
    <property type="entry name" value="Spaetzle"/>
    <property type="match status" value="1"/>
</dbReference>
<dbReference type="SUPFAM" id="SSF57501">
    <property type="entry name" value="Cystine-knot cytokines"/>
    <property type="match status" value="1"/>
</dbReference>
<reference evidence="12 14" key="1">
    <citation type="journal article" date="2008" name="PLoS Biol.">
        <title>Drosophila neurotrophins reveal a common mechanism for nervous system formation.</title>
        <authorList>
            <person name="Zhu B."/>
            <person name="Pennack J.A."/>
            <person name="McQuilton P."/>
            <person name="Forero M.G."/>
            <person name="Mizuguchi K."/>
            <person name="Sutcliffe B."/>
            <person name="Gu C.-J."/>
            <person name="Fenton J.C."/>
            <person name="Hidalgo A."/>
        </authorList>
    </citation>
    <scope>NUCLEOTIDE SEQUENCE [MRNA] (ISOFORMS B AND D)</scope>
    <scope>FUNCTION</scope>
    <scope>TISSUE SPECIFICITY</scope>
    <scope>DEVELOPMENTAL STAGE</scope>
    <scope>POSSIBLE CLEAVAGE</scope>
</reference>
<reference evidence="16" key="2">
    <citation type="journal article" date="2000" name="Science">
        <title>The genome sequence of Drosophila melanogaster.</title>
        <authorList>
            <person name="Adams M.D."/>
            <person name="Celniker S.E."/>
            <person name="Holt R.A."/>
            <person name="Evans C.A."/>
            <person name="Gocayne J.D."/>
            <person name="Amanatides P.G."/>
            <person name="Scherer S.E."/>
            <person name="Li P.W."/>
            <person name="Hoskins R.A."/>
            <person name="Galle R.F."/>
            <person name="George R.A."/>
            <person name="Lewis S.E."/>
            <person name="Richards S."/>
            <person name="Ashburner M."/>
            <person name="Henderson S.N."/>
            <person name="Sutton G.G."/>
            <person name="Wortman J.R."/>
            <person name="Yandell M.D."/>
            <person name="Zhang Q."/>
            <person name="Chen L.X."/>
            <person name="Brandon R.C."/>
            <person name="Rogers Y.-H.C."/>
            <person name="Blazej R.G."/>
            <person name="Champe M."/>
            <person name="Pfeiffer B.D."/>
            <person name="Wan K.H."/>
            <person name="Doyle C."/>
            <person name="Baxter E.G."/>
            <person name="Helt G."/>
            <person name="Nelson C.R."/>
            <person name="Miklos G.L.G."/>
            <person name="Abril J.F."/>
            <person name="Agbayani A."/>
            <person name="An H.-J."/>
            <person name="Andrews-Pfannkoch C."/>
            <person name="Baldwin D."/>
            <person name="Ballew R.M."/>
            <person name="Basu A."/>
            <person name="Baxendale J."/>
            <person name="Bayraktaroglu L."/>
            <person name="Beasley E.M."/>
            <person name="Beeson K.Y."/>
            <person name="Benos P.V."/>
            <person name="Berman B.P."/>
            <person name="Bhandari D."/>
            <person name="Bolshakov S."/>
            <person name="Borkova D."/>
            <person name="Botchan M.R."/>
            <person name="Bouck J."/>
            <person name="Brokstein P."/>
            <person name="Brottier P."/>
            <person name="Burtis K.C."/>
            <person name="Busam D.A."/>
            <person name="Butler H."/>
            <person name="Cadieu E."/>
            <person name="Center A."/>
            <person name="Chandra I."/>
            <person name="Cherry J.M."/>
            <person name="Cawley S."/>
            <person name="Dahlke C."/>
            <person name="Davenport L.B."/>
            <person name="Davies P."/>
            <person name="de Pablos B."/>
            <person name="Delcher A."/>
            <person name="Deng Z."/>
            <person name="Mays A.D."/>
            <person name="Dew I."/>
            <person name="Dietz S.M."/>
            <person name="Dodson K."/>
            <person name="Doup L.E."/>
            <person name="Downes M."/>
            <person name="Dugan-Rocha S."/>
            <person name="Dunkov B.C."/>
            <person name="Dunn P."/>
            <person name="Durbin K.J."/>
            <person name="Evangelista C.C."/>
            <person name="Ferraz C."/>
            <person name="Ferriera S."/>
            <person name="Fleischmann W."/>
            <person name="Fosler C."/>
            <person name="Gabrielian A.E."/>
            <person name="Garg N.S."/>
            <person name="Gelbart W.M."/>
            <person name="Glasser K."/>
            <person name="Glodek A."/>
            <person name="Gong F."/>
            <person name="Gorrell J.H."/>
            <person name="Gu Z."/>
            <person name="Guan P."/>
            <person name="Harris M."/>
            <person name="Harris N.L."/>
            <person name="Harvey D.A."/>
            <person name="Heiman T.J."/>
            <person name="Hernandez J.R."/>
            <person name="Houck J."/>
            <person name="Hostin D."/>
            <person name="Houston K.A."/>
            <person name="Howland T.J."/>
            <person name="Wei M.-H."/>
            <person name="Ibegwam C."/>
            <person name="Jalali M."/>
            <person name="Kalush F."/>
            <person name="Karpen G.H."/>
            <person name="Ke Z."/>
            <person name="Kennison J.A."/>
            <person name="Ketchum K.A."/>
            <person name="Kimmel B.E."/>
            <person name="Kodira C.D."/>
            <person name="Kraft C.L."/>
            <person name="Kravitz S."/>
            <person name="Kulp D."/>
            <person name="Lai Z."/>
            <person name="Lasko P."/>
            <person name="Lei Y."/>
            <person name="Levitsky A.A."/>
            <person name="Li J.H."/>
            <person name="Li Z."/>
            <person name="Liang Y."/>
            <person name="Lin X."/>
            <person name="Liu X."/>
            <person name="Mattei B."/>
            <person name="McIntosh T.C."/>
            <person name="McLeod M.P."/>
            <person name="McPherson D."/>
            <person name="Merkulov G."/>
            <person name="Milshina N.V."/>
            <person name="Mobarry C."/>
            <person name="Morris J."/>
            <person name="Moshrefi A."/>
            <person name="Mount S.M."/>
            <person name="Moy M."/>
            <person name="Murphy B."/>
            <person name="Murphy L."/>
            <person name="Muzny D.M."/>
            <person name="Nelson D.L."/>
            <person name="Nelson D.R."/>
            <person name="Nelson K.A."/>
            <person name="Nixon K."/>
            <person name="Nusskern D.R."/>
            <person name="Pacleb J.M."/>
            <person name="Palazzolo M."/>
            <person name="Pittman G.S."/>
            <person name="Pan S."/>
            <person name="Pollard J."/>
            <person name="Puri V."/>
            <person name="Reese M.G."/>
            <person name="Reinert K."/>
            <person name="Remington K."/>
            <person name="Saunders R.D.C."/>
            <person name="Scheeler F."/>
            <person name="Shen H."/>
            <person name="Shue B.C."/>
            <person name="Siden-Kiamos I."/>
            <person name="Simpson M."/>
            <person name="Skupski M.P."/>
            <person name="Smith T.J."/>
            <person name="Spier E."/>
            <person name="Spradling A.C."/>
            <person name="Stapleton M."/>
            <person name="Strong R."/>
            <person name="Sun E."/>
            <person name="Svirskas R."/>
            <person name="Tector C."/>
            <person name="Turner R."/>
            <person name="Venter E."/>
            <person name="Wang A.H."/>
            <person name="Wang X."/>
            <person name="Wang Z.-Y."/>
            <person name="Wassarman D.A."/>
            <person name="Weinstock G.M."/>
            <person name="Weissenbach J."/>
            <person name="Williams S.M."/>
            <person name="Woodage T."/>
            <person name="Worley K.C."/>
            <person name="Wu D."/>
            <person name="Yang S."/>
            <person name="Yao Q.A."/>
            <person name="Ye J."/>
            <person name="Yeh R.-F."/>
            <person name="Zaveri J.S."/>
            <person name="Zhan M."/>
            <person name="Zhang G."/>
            <person name="Zhao Q."/>
            <person name="Zheng L."/>
            <person name="Zheng X.H."/>
            <person name="Zhong F.N."/>
            <person name="Zhong W."/>
            <person name="Zhou X."/>
            <person name="Zhu S.C."/>
            <person name="Zhu X."/>
            <person name="Smith H.O."/>
            <person name="Gibbs R.A."/>
            <person name="Myers E.W."/>
            <person name="Rubin G.M."/>
            <person name="Venter J.C."/>
        </authorList>
    </citation>
    <scope>NUCLEOTIDE SEQUENCE [LARGE SCALE GENOMIC DNA]</scope>
    <source>
        <strain>Berkeley</strain>
    </source>
</reference>
<reference evidence="16" key="3">
    <citation type="journal article" date="2002" name="Genome Biol.">
        <title>Annotation of the Drosophila melanogaster euchromatic genome: a systematic review.</title>
        <authorList>
            <person name="Misra S."/>
            <person name="Crosby M.A."/>
            <person name="Mungall C.J."/>
            <person name="Matthews B.B."/>
            <person name="Campbell K.S."/>
            <person name="Hradecky P."/>
            <person name="Huang Y."/>
            <person name="Kaminker J.S."/>
            <person name="Millburn G.H."/>
            <person name="Prochnik S.E."/>
            <person name="Smith C.D."/>
            <person name="Tupy J.L."/>
            <person name="Whitfield E.J."/>
            <person name="Bayraktaroglu L."/>
            <person name="Berman B.P."/>
            <person name="Bettencourt B.R."/>
            <person name="Celniker S.E."/>
            <person name="de Grey A.D.N.J."/>
            <person name="Drysdale R.A."/>
            <person name="Harris N.L."/>
            <person name="Richter J."/>
            <person name="Russo S."/>
            <person name="Schroeder A.J."/>
            <person name="Shu S.Q."/>
            <person name="Stapleton M."/>
            <person name="Yamada C."/>
            <person name="Ashburner M."/>
            <person name="Gelbart W.M."/>
            <person name="Rubin G.M."/>
            <person name="Lewis S.E."/>
        </authorList>
    </citation>
    <scope>GENOME REANNOTATION</scope>
    <source>
        <strain evidence="16">Berkeley</strain>
    </source>
</reference>
<reference evidence="13" key="4">
    <citation type="submission" date="2010-01" db="EMBL/GenBank/DDBJ databases">
        <authorList>
            <person name="Carlson J."/>
            <person name="Booth B."/>
            <person name="Frise E."/>
            <person name="Park S."/>
            <person name="Wan K."/>
            <person name="Yu C."/>
            <person name="Celniker S."/>
        </authorList>
    </citation>
    <scope>NUCLEOTIDE SEQUENCE [LARGE SCALE MRNA] (ISOFORM B)</scope>
</reference>
<reference evidence="11" key="5">
    <citation type="journal article" date="2001" name="Proteins">
        <title>A family of proteins related to Spaetzle, the toll receptor ligand, are encoded in the Drosophila genome.</title>
        <authorList>
            <person name="Parker J.S."/>
            <person name="Mizuguchi K."/>
            <person name="Gay N.J."/>
        </authorList>
    </citation>
    <scope>IDENTIFICATION</scope>
</reference>
<reference evidence="11" key="6">
    <citation type="journal article" date="2011" name="PLoS Pathog.">
        <title>Toll-8/Tollo negatively regulates antimicrobial response in the Drosophila respiratory epithelium.</title>
        <authorList>
            <person name="Akhouayri I."/>
            <person name="Turc C."/>
            <person name="Royet J."/>
            <person name="Charroux B."/>
        </authorList>
    </citation>
    <scope>FUNCTION</scope>
</reference>
<reference evidence="11" key="7">
    <citation type="journal article" date="2013" name="Nat. Neurosci.">
        <title>Toll-6 and Toll-7 function as neurotrophin receptors in the Drosophila melanogaster CNS.</title>
        <authorList>
            <person name="McIlroy G."/>
            <person name="Foldi I."/>
            <person name="Aurikko J."/>
            <person name="Wentzell J.S."/>
            <person name="Lim M.A."/>
            <person name="Fenton J.C."/>
            <person name="Gay N.J."/>
            <person name="Hidalgo A."/>
        </authorList>
    </citation>
    <scope>FUNCTION</scope>
    <scope>TISSUE SPECIFICITY</scope>
    <scope>DEVELOPMENTAL STAGE</scope>
</reference>
<reference evidence="11" key="8">
    <citation type="journal article" date="2013" name="PLoS ONE">
        <title>Neuron-type specific functions of DNT1, DNT2 and Spz at the Drosophila neuromuscular junction.</title>
        <authorList>
            <person name="Sutcliffe B."/>
            <person name="Forero M.G."/>
            <person name="Zhu B."/>
            <person name="Robinson I.M."/>
            <person name="Hidalgo A."/>
        </authorList>
    </citation>
    <scope>FUNCTION</scope>
    <scope>DEVELOPMENTAL STAGE</scope>
</reference>
<comment type="function">
    <text evidence="5 6 7 8">Neurotrophin which may function as a ligand for the Toll-related receptors Toll-7 and Tollo (PubMed:22022271, PubMed:23892553). Binds to Toll-7 and probably acts as its ligand in promoting motor axon targeting and neuronal survival in the central nervous system (CNS) (PubMed:23892553). Involved in synaptic targeting of ISNb/d motorneurons and also some SNa motorneurons (PubMed:19018662). In larvae, involved in the negative regulation of the tracheal immune response to bacterial infection perhaps by acting as a ligand for the Toll-related receptor Tollo (PubMed:22022271). May be involved in the normal development of specific neurons at the neuromuscular junction (PubMed:24124519).</text>
</comment>
<comment type="subunit">
    <text evidence="1">Homodimer; disulfide-linked.</text>
</comment>
<comment type="alternative products">
    <event type="alternative splicing"/>
    <isoform>
        <id>B7TB45-1</id>
        <name evidence="15">D</name>
        <name evidence="9">long</name>
        <sequence type="displayed"/>
    </isoform>
    <isoform>
        <id>B7TB45-2</id>
        <name evidence="15">B</name>
        <name evidence="15">C</name>
        <name evidence="15">E</name>
        <name evidence="9">short</name>
        <sequence type="described" ref="VSP_058559"/>
    </isoform>
</comment>
<comment type="tissue specificity">
    <text evidence="5 7">Detected in the fan-shaped body which is a component of the locomotion center in the central nervous system (CNS) (at protein level) (PubMed:23892553). Expressed in the optic lobes and brain (PubMed:19018662).</text>
</comment>
<comment type="developmental stage">
    <text evidence="5 7 8">Expressed throughout development (PubMed:19018662). Expressed in the embryonic CNS midline (at protein level) (PubMed:23892553). Also expressed in various longitudinal muscles (at protein level) (PubMed:23892553). In embryos, expressed in the CNS midline and in the muscles (PubMed:19018662). In larvae, expressed in the lamina of the optic lobe (PubMed:19018662). Expressed in larval body wall muscles (PubMed:24124519).</text>
</comment>
<comment type="miscellaneous">
    <text evidence="11">'Spaetzle' means 'noodles' in German.</text>
</comment>
<organism evidence="16">
    <name type="scientific">Drosophila melanogaster</name>
    <name type="common">Fruit fly</name>
    <dbReference type="NCBI Taxonomy" id="7227"/>
    <lineage>
        <taxon>Eukaryota</taxon>
        <taxon>Metazoa</taxon>
        <taxon>Ecdysozoa</taxon>
        <taxon>Arthropoda</taxon>
        <taxon>Hexapoda</taxon>
        <taxon>Insecta</taxon>
        <taxon>Pterygota</taxon>
        <taxon>Neoptera</taxon>
        <taxon>Endopterygota</taxon>
        <taxon>Diptera</taxon>
        <taxon>Brachycera</taxon>
        <taxon>Muscomorpha</taxon>
        <taxon>Ephydroidea</taxon>
        <taxon>Drosophilidae</taxon>
        <taxon>Drosophila</taxon>
        <taxon>Sophophora</taxon>
    </lineage>
</organism>
<evidence type="ECO:0000250" key="1">
    <source>
        <dbReference type="UniProtKB" id="P48607"/>
    </source>
</evidence>
<evidence type="ECO:0000255" key="2"/>
<evidence type="ECO:0000255" key="3">
    <source>
        <dbReference type="PROSITE-ProRule" id="PRU00498"/>
    </source>
</evidence>
<evidence type="ECO:0000256" key="4">
    <source>
        <dbReference type="SAM" id="MobiDB-lite"/>
    </source>
</evidence>
<evidence type="ECO:0000269" key="5">
    <source>
    </source>
</evidence>
<evidence type="ECO:0000269" key="6">
    <source>
    </source>
</evidence>
<evidence type="ECO:0000269" key="7">
    <source>
    </source>
</evidence>
<evidence type="ECO:0000269" key="8">
    <source>
    </source>
</evidence>
<evidence type="ECO:0000303" key="9">
    <source>
    </source>
</evidence>
<evidence type="ECO:0000303" key="10">
    <source>
    </source>
</evidence>
<evidence type="ECO:0000305" key="11"/>
<evidence type="ECO:0000312" key="12">
    <source>
        <dbReference type="EMBL" id="ACH98104.1"/>
    </source>
</evidence>
<evidence type="ECO:0000312" key="13">
    <source>
        <dbReference type="EMBL" id="ADB91456.1"/>
    </source>
</evidence>
<evidence type="ECO:0000312" key="14">
    <source>
        <dbReference type="EMBL" id="DAA06447.1"/>
    </source>
</evidence>
<evidence type="ECO:0000312" key="15">
    <source>
        <dbReference type="FlyBase" id="FBgn0261526"/>
    </source>
</evidence>
<evidence type="ECO:0000312" key="16">
    <source>
        <dbReference type="Proteomes" id="UP000000803"/>
    </source>
</evidence>
<keyword id="KW-0025">Alternative splicing</keyword>
<keyword id="KW-1015">Disulfide bond</keyword>
<keyword id="KW-0325">Glycoprotein</keyword>
<keyword id="KW-1185">Reference proteome</keyword>
<keyword id="KW-0732">Signal</keyword>
<feature type="signal peptide" evidence="2">
    <location>
        <begin position="1"/>
        <end position="29"/>
    </location>
</feature>
<feature type="propeptide" id="PRO_0000437664" evidence="10">
    <location>
        <begin position="30"/>
        <end position="498"/>
    </location>
</feature>
<feature type="chain" id="PRO_5007308668" description="Neurotrophin 1" evidence="10">
    <location>
        <begin position="499"/>
        <end position="886"/>
    </location>
</feature>
<feature type="domain" description="Spaetzle" evidence="2">
    <location>
        <begin position="508"/>
        <end position="597"/>
    </location>
</feature>
<feature type="region of interest" description="Disordered" evidence="4">
    <location>
        <begin position="321"/>
        <end position="340"/>
    </location>
</feature>
<feature type="region of interest" description="Disordered" evidence="4">
    <location>
        <begin position="369"/>
        <end position="436"/>
    </location>
</feature>
<feature type="region of interest" description="Disordered" evidence="4">
    <location>
        <begin position="675"/>
        <end position="754"/>
    </location>
</feature>
<feature type="region of interest" description="Disordered" evidence="4">
    <location>
        <begin position="789"/>
        <end position="886"/>
    </location>
</feature>
<feature type="compositionally biased region" description="Low complexity" evidence="4">
    <location>
        <begin position="698"/>
        <end position="710"/>
    </location>
</feature>
<feature type="compositionally biased region" description="Pro residues" evidence="4">
    <location>
        <begin position="797"/>
        <end position="807"/>
    </location>
</feature>
<feature type="compositionally biased region" description="Basic residues" evidence="4">
    <location>
        <begin position="815"/>
        <end position="827"/>
    </location>
</feature>
<feature type="compositionally biased region" description="Basic residues" evidence="4">
    <location>
        <begin position="874"/>
        <end position="886"/>
    </location>
</feature>
<feature type="site" description="Cleavage" evidence="5">
    <location>
        <begin position="498"/>
        <end position="499"/>
    </location>
</feature>
<feature type="glycosylation site" description="N-linked (GlcNAc...) asparagine" evidence="3">
    <location>
        <position position="267"/>
    </location>
</feature>
<feature type="glycosylation site" description="N-linked (GlcNAc...) asparagine" evidence="3">
    <location>
        <position position="317"/>
    </location>
</feature>
<feature type="glycosylation site" description="N-linked (GlcNAc...) asparagine" evidence="3">
    <location>
        <position position="353"/>
    </location>
</feature>
<feature type="glycosylation site" description="N-linked (GlcNAc...) asparagine" evidence="3">
    <location>
        <position position="623"/>
    </location>
</feature>
<feature type="disulfide bond" evidence="1">
    <location>
        <begin position="509"/>
        <end position="564"/>
    </location>
</feature>
<feature type="disulfide bond" evidence="1">
    <location>
        <begin position="546"/>
        <end position="593"/>
    </location>
</feature>
<feature type="disulfide bond" evidence="1">
    <location>
        <begin position="553"/>
        <end position="595"/>
    </location>
</feature>
<feature type="disulfide bond" description="Interchain" evidence="1">
    <location>
        <position position="592"/>
    </location>
</feature>
<feature type="splice variant" id="VSP_058559" description="In isoform B.">
    <location>
        <begin position="455"/>
        <end position="886"/>
    </location>
</feature>
<proteinExistence type="evidence at protein level"/>